<dbReference type="EMBL" id="AJ294544">
    <property type="protein sequence ID" value="CAC82379.1"/>
    <property type="molecule type" value="mRNA"/>
</dbReference>
<dbReference type="FunCoup" id="Q8VDA6">
    <property type="interactions" value="3"/>
</dbReference>
<dbReference type="STRING" id="10116.ENSRNOP00000019978"/>
<dbReference type="BindingDB" id="Q8VDA6"/>
<dbReference type="PhosphoSitePlus" id="Q8VDA6"/>
<dbReference type="PaxDb" id="10116-ENSRNOP00000019978"/>
<dbReference type="UCSC" id="RGD:621721">
    <property type="organism name" value="rat"/>
</dbReference>
<dbReference type="AGR" id="RGD:621721"/>
<dbReference type="RGD" id="621721">
    <property type="gene designation" value="Avpi1"/>
</dbReference>
<dbReference type="eggNOG" id="ENOG502SBE0">
    <property type="taxonomic scope" value="Eukaryota"/>
</dbReference>
<dbReference type="InParanoid" id="Q8VDA6"/>
<dbReference type="PhylomeDB" id="Q8VDA6"/>
<dbReference type="PRO" id="PR:Q8VDA6"/>
<dbReference type="Proteomes" id="UP000002494">
    <property type="component" value="Unplaced"/>
</dbReference>
<dbReference type="GO" id="GO:0043410">
    <property type="term" value="P:positive regulation of MAPK cascade"/>
    <property type="evidence" value="ECO:0000266"/>
    <property type="project" value="RGD"/>
</dbReference>
<dbReference type="InterPro" id="IPR039579">
    <property type="entry name" value="AVPI1"/>
</dbReference>
<dbReference type="InterPro" id="IPR020282">
    <property type="entry name" value="Avpi1/C8orf4_dom"/>
</dbReference>
<dbReference type="PANTHER" id="PTHR14350">
    <property type="entry name" value="ARGININE VASOPRESSIN-INDUCED PROTEIN 1"/>
    <property type="match status" value="1"/>
</dbReference>
<dbReference type="Pfam" id="PF15063">
    <property type="entry name" value="TC1"/>
    <property type="match status" value="1"/>
</dbReference>
<feature type="chain" id="PRO_0000282405" description="Arginine vasopressin-induced protein 1">
    <location>
        <begin position="1"/>
        <end position="146"/>
    </location>
</feature>
<feature type="region of interest" description="Disordered" evidence="2">
    <location>
        <begin position="1"/>
        <end position="31"/>
    </location>
</feature>
<feature type="region of interest" description="Disordered" evidence="2">
    <location>
        <begin position="80"/>
        <end position="146"/>
    </location>
</feature>
<feature type="compositionally biased region" description="Basic residues" evidence="2">
    <location>
        <begin position="80"/>
        <end position="92"/>
    </location>
</feature>
<feature type="compositionally biased region" description="Polar residues" evidence="2">
    <location>
        <begin position="106"/>
        <end position="123"/>
    </location>
</feature>
<proteinExistence type="evidence at transcript level"/>
<comment type="function">
    <text evidence="1">May be involved in MAP kinase activation, epithelial sodium channel (ENaC) down-regulation and cell cycling.</text>
</comment>
<sequence length="146" mass="16412">MGTPASVVSEPPLWQVSTAQPRDRGRGRKQASANIFQDAELVQIQGLFQRSGDQLAEERAQIIWECAGDHRVAEALRRLRRKRPPRQNHCSRLRVPELGSTAADPQASTTDTASSEQFGNSRRTSARVHRNWNKPGPTGYLHQIRH</sequence>
<keyword id="KW-0131">Cell cycle</keyword>
<keyword id="KW-1185">Reference proteome</keyword>
<accession>Q8VDA6</accession>
<reference key="1">
    <citation type="submission" date="2000-09" db="EMBL/GenBank/DDBJ databases">
        <title>Characterization of the novel brain-specific protein Esau.</title>
        <authorList>
            <person name="Landwehr M."/>
            <person name="Hoffmann B."/>
            <person name="Seidenbecher C.I."/>
            <person name="Dieterich D.C."/>
            <person name="Kreutz M.R."/>
        </authorList>
    </citation>
    <scope>NUCLEOTIDE SEQUENCE [MRNA]</scope>
    <source>
        <strain>Sprague-Dawley</strain>
        <tissue>Brain</tissue>
    </source>
</reference>
<name>AVPI1_RAT</name>
<protein>
    <recommendedName>
        <fullName>Arginine vasopressin-induced protein 1</fullName>
        <shortName>AVP-induced protein 1</shortName>
    </recommendedName>
</protein>
<gene>
    <name type="primary">Avpi1</name>
    <name type="synonym">Esau</name>
</gene>
<evidence type="ECO:0000250" key="1"/>
<evidence type="ECO:0000256" key="2">
    <source>
        <dbReference type="SAM" id="MobiDB-lite"/>
    </source>
</evidence>
<organism>
    <name type="scientific">Rattus norvegicus</name>
    <name type="common">Rat</name>
    <dbReference type="NCBI Taxonomy" id="10116"/>
    <lineage>
        <taxon>Eukaryota</taxon>
        <taxon>Metazoa</taxon>
        <taxon>Chordata</taxon>
        <taxon>Craniata</taxon>
        <taxon>Vertebrata</taxon>
        <taxon>Euteleostomi</taxon>
        <taxon>Mammalia</taxon>
        <taxon>Eutheria</taxon>
        <taxon>Euarchontoglires</taxon>
        <taxon>Glires</taxon>
        <taxon>Rodentia</taxon>
        <taxon>Myomorpha</taxon>
        <taxon>Muroidea</taxon>
        <taxon>Muridae</taxon>
        <taxon>Murinae</taxon>
        <taxon>Rattus</taxon>
    </lineage>
</organism>